<sequence length="125" mass="13937">MSFSGKYQQVSQENFEPFMKAIGLPDEVIQQVKELKSTSEIEQNGNDFKITITTGPKVTVNKFTIGKETEMDTITGEKIKTVFHLDGNKLKVSLKGIESVTELADPNTITMTLGDVVYKTTSKRM</sequence>
<dbReference type="EMBL" id="U90880">
    <property type="protein sequence ID" value="AAC60290.1"/>
    <property type="molecule type" value="Genomic_DNA"/>
</dbReference>
<dbReference type="SMR" id="O42494"/>
<dbReference type="FunCoup" id="O42494">
    <property type="interactions" value="35"/>
</dbReference>
<dbReference type="STRING" id="31033.ENSTRUP00000039915"/>
<dbReference type="eggNOG" id="KOG4015">
    <property type="taxonomic scope" value="Eukaryota"/>
</dbReference>
<dbReference type="InParanoid" id="O42494"/>
<dbReference type="Proteomes" id="UP000005226">
    <property type="component" value="Unplaced"/>
</dbReference>
<dbReference type="GO" id="GO:0005737">
    <property type="term" value="C:cytoplasm"/>
    <property type="evidence" value="ECO:0007669"/>
    <property type="project" value="UniProtKB-SubCell"/>
</dbReference>
<dbReference type="GO" id="GO:0008289">
    <property type="term" value="F:lipid binding"/>
    <property type="evidence" value="ECO:0007669"/>
    <property type="project" value="UniProtKB-KW"/>
</dbReference>
<dbReference type="FunFam" id="2.40.128.20:FF:000006">
    <property type="entry name" value="Fatty acid-binding protein, liver"/>
    <property type="match status" value="1"/>
</dbReference>
<dbReference type="Gene3D" id="2.40.128.20">
    <property type="match status" value="1"/>
</dbReference>
<dbReference type="InterPro" id="IPR012674">
    <property type="entry name" value="Calycin"/>
</dbReference>
<dbReference type="InterPro" id="IPR000463">
    <property type="entry name" value="Fatty_acid-bd"/>
</dbReference>
<dbReference type="InterPro" id="IPR031259">
    <property type="entry name" value="ILBP"/>
</dbReference>
<dbReference type="PANTHER" id="PTHR11955">
    <property type="entry name" value="FATTY ACID BINDING PROTEIN"/>
    <property type="match status" value="1"/>
</dbReference>
<dbReference type="Pfam" id="PF14651">
    <property type="entry name" value="Lipocalin_7"/>
    <property type="match status" value="1"/>
</dbReference>
<dbReference type="PRINTS" id="PR00178">
    <property type="entry name" value="FATTYACIDBP"/>
</dbReference>
<dbReference type="SUPFAM" id="SSF50814">
    <property type="entry name" value="Lipocalins"/>
    <property type="match status" value="1"/>
</dbReference>
<comment type="subcellular location">
    <subcellularLocation>
        <location evidence="1">Cytoplasm</location>
    </subcellularLocation>
</comment>
<comment type="similarity">
    <text evidence="1">Belongs to the calycin superfamily. Fatty-acid binding protein (FABP) family.</text>
</comment>
<feature type="chain" id="PRO_0000067342" description="Fatty acid-binding protein, liver-type">
    <location>
        <begin position="1"/>
        <end position="125"/>
    </location>
</feature>
<gene>
    <name type="primary">fabp1</name>
</gene>
<protein>
    <recommendedName>
        <fullName>Fatty acid-binding protein, liver-type</fullName>
    </recommendedName>
    <alternativeName>
        <fullName>Fatty acid-binding protein 1</fullName>
    </alternativeName>
    <alternativeName>
        <fullName>Liver-type fatty acid-binding protein</fullName>
        <shortName>L-FABP</shortName>
    </alternativeName>
</protein>
<evidence type="ECO:0000305" key="1"/>
<reference key="1">
    <citation type="journal article" date="1997" name="Proc. Natl. Acad. Sci. U.S.A.">
        <title>Transgenic rats reveal functional conservation of regulatory controls between the Fugu isotocin and rat oxytocin genes.</title>
        <authorList>
            <person name="Venkatesh B."/>
            <person name="Si-Hoe S.L."/>
            <person name="Murphy D."/>
            <person name="Brenner S."/>
        </authorList>
    </citation>
    <scope>NUCLEOTIDE SEQUENCE [GENOMIC DNA]</scope>
</reference>
<accession>O42494</accession>
<proteinExistence type="inferred from homology"/>
<name>FABPL_TAKRU</name>
<organism>
    <name type="scientific">Takifugu rubripes</name>
    <name type="common">Japanese pufferfish</name>
    <name type="synonym">Fugu rubripes</name>
    <dbReference type="NCBI Taxonomy" id="31033"/>
    <lineage>
        <taxon>Eukaryota</taxon>
        <taxon>Metazoa</taxon>
        <taxon>Chordata</taxon>
        <taxon>Craniata</taxon>
        <taxon>Vertebrata</taxon>
        <taxon>Euteleostomi</taxon>
        <taxon>Actinopterygii</taxon>
        <taxon>Neopterygii</taxon>
        <taxon>Teleostei</taxon>
        <taxon>Neoteleostei</taxon>
        <taxon>Acanthomorphata</taxon>
        <taxon>Eupercaria</taxon>
        <taxon>Tetraodontiformes</taxon>
        <taxon>Tetradontoidea</taxon>
        <taxon>Tetraodontidae</taxon>
        <taxon>Takifugu</taxon>
    </lineage>
</organism>
<keyword id="KW-0963">Cytoplasm</keyword>
<keyword id="KW-0446">Lipid-binding</keyword>
<keyword id="KW-1185">Reference proteome</keyword>
<keyword id="KW-0813">Transport</keyword>